<organism>
    <name type="scientific">Citrobacter koseri (strain ATCC BAA-895 / CDC 4225-83 / SGSC4696)</name>
    <dbReference type="NCBI Taxonomy" id="290338"/>
    <lineage>
        <taxon>Bacteria</taxon>
        <taxon>Pseudomonadati</taxon>
        <taxon>Pseudomonadota</taxon>
        <taxon>Gammaproteobacteria</taxon>
        <taxon>Enterobacterales</taxon>
        <taxon>Enterobacteriaceae</taxon>
        <taxon>Citrobacter</taxon>
    </lineage>
</organism>
<dbReference type="EC" id="1.1.1.290" evidence="1"/>
<dbReference type="EMBL" id="CP000822">
    <property type="protein sequence ID" value="ABV11622.1"/>
    <property type="molecule type" value="Genomic_DNA"/>
</dbReference>
<dbReference type="RefSeq" id="WP_012131449.1">
    <property type="nucleotide sequence ID" value="NC_009792.1"/>
</dbReference>
<dbReference type="SMR" id="A8ADQ9"/>
<dbReference type="STRING" id="290338.CKO_00466"/>
<dbReference type="GeneID" id="45134713"/>
<dbReference type="KEGG" id="cko:CKO_00466"/>
<dbReference type="HOGENOM" id="CLU_019796_4_0_6"/>
<dbReference type="OrthoDB" id="9770208at2"/>
<dbReference type="UniPathway" id="UPA00244">
    <property type="reaction ID" value="UER00310"/>
</dbReference>
<dbReference type="Proteomes" id="UP000008148">
    <property type="component" value="Chromosome"/>
</dbReference>
<dbReference type="GO" id="GO:0005829">
    <property type="term" value="C:cytosol"/>
    <property type="evidence" value="ECO:0007669"/>
    <property type="project" value="TreeGrafter"/>
</dbReference>
<dbReference type="GO" id="GO:0033711">
    <property type="term" value="F:4-phosphoerythronate dehydrogenase activity"/>
    <property type="evidence" value="ECO:0007669"/>
    <property type="project" value="UniProtKB-EC"/>
</dbReference>
<dbReference type="GO" id="GO:0051287">
    <property type="term" value="F:NAD binding"/>
    <property type="evidence" value="ECO:0007669"/>
    <property type="project" value="InterPro"/>
</dbReference>
<dbReference type="GO" id="GO:0046983">
    <property type="term" value="F:protein dimerization activity"/>
    <property type="evidence" value="ECO:0007669"/>
    <property type="project" value="InterPro"/>
</dbReference>
<dbReference type="GO" id="GO:0036001">
    <property type="term" value="P:'de novo' pyridoxal 5'-phosphate biosynthetic process"/>
    <property type="evidence" value="ECO:0007669"/>
    <property type="project" value="TreeGrafter"/>
</dbReference>
<dbReference type="GO" id="GO:0008615">
    <property type="term" value="P:pyridoxine biosynthetic process"/>
    <property type="evidence" value="ECO:0007669"/>
    <property type="project" value="UniProtKB-UniRule"/>
</dbReference>
<dbReference type="CDD" id="cd12158">
    <property type="entry name" value="ErythrP_dh"/>
    <property type="match status" value="1"/>
</dbReference>
<dbReference type="FunFam" id="3.30.1370.170:FF:000001">
    <property type="entry name" value="Erythronate-4-phosphate dehydrogenase"/>
    <property type="match status" value="1"/>
</dbReference>
<dbReference type="FunFam" id="3.40.50.720:FF:000093">
    <property type="entry name" value="Erythronate-4-phosphate dehydrogenase"/>
    <property type="match status" value="1"/>
</dbReference>
<dbReference type="Gene3D" id="3.30.1370.170">
    <property type="match status" value="1"/>
</dbReference>
<dbReference type="Gene3D" id="3.40.50.720">
    <property type="entry name" value="NAD(P)-binding Rossmann-like Domain"/>
    <property type="match status" value="2"/>
</dbReference>
<dbReference type="HAMAP" id="MF_01825">
    <property type="entry name" value="PdxB"/>
    <property type="match status" value="1"/>
</dbReference>
<dbReference type="InterPro" id="IPR006139">
    <property type="entry name" value="D-isomer_2_OHA_DH_cat_dom"/>
</dbReference>
<dbReference type="InterPro" id="IPR029753">
    <property type="entry name" value="D-isomer_DH_CS"/>
</dbReference>
<dbReference type="InterPro" id="IPR029752">
    <property type="entry name" value="D-isomer_DH_CS1"/>
</dbReference>
<dbReference type="InterPro" id="IPR006140">
    <property type="entry name" value="D-isomer_DH_NAD-bd"/>
</dbReference>
<dbReference type="InterPro" id="IPR020921">
    <property type="entry name" value="Erythronate-4-P_DHase"/>
</dbReference>
<dbReference type="InterPro" id="IPR024531">
    <property type="entry name" value="Erythronate-4-P_DHase_dimer"/>
</dbReference>
<dbReference type="InterPro" id="IPR036291">
    <property type="entry name" value="NAD(P)-bd_dom_sf"/>
</dbReference>
<dbReference type="InterPro" id="IPR038251">
    <property type="entry name" value="PdxB_dimer_sf"/>
</dbReference>
<dbReference type="NCBIfam" id="NF001309">
    <property type="entry name" value="PRK00257.1"/>
    <property type="match status" value="1"/>
</dbReference>
<dbReference type="NCBIfam" id="NF011966">
    <property type="entry name" value="PRK15438.1"/>
    <property type="match status" value="1"/>
</dbReference>
<dbReference type="PANTHER" id="PTHR42938">
    <property type="entry name" value="FORMATE DEHYDROGENASE 1"/>
    <property type="match status" value="1"/>
</dbReference>
<dbReference type="PANTHER" id="PTHR42938:SF9">
    <property type="entry name" value="FORMATE DEHYDROGENASE 1"/>
    <property type="match status" value="1"/>
</dbReference>
<dbReference type="Pfam" id="PF00389">
    <property type="entry name" value="2-Hacid_dh"/>
    <property type="match status" value="1"/>
</dbReference>
<dbReference type="Pfam" id="PF02826">
    <property type="entry name" value="2-Hacid_dh_C"/>
    <property type="match status" value="1"/>
</dbReference>
<dbReference type="Pfam" id="PF11890">
    <property type="entry name" value="DUF3410"/>
    <property type="match status" value="1"/>
</dbReference>
<dbReference type="SUPFAM" id="SSF52283">
    <property type="entry name" value="Formate/glycerate dehydrogenase catalytic domain-like"/>
    <property type="match status" value="1"/>
</dbReference>
<dbReference type="SUPFAM" id="SSF51735">
    <property type="entry name" value="NAD(P)-binding Rossmann-fold domains"/>
    <property type="match status" value="1"/>
</dbReference>
<dbReference type="PROSITE" id="PS00065">
    <property type="entry name" value="D_2_HYDROXYACID_DH_1"/>
    <property type="match status" value="1"/>
</dbReference>
<dbReference type="PROSITE" id="PS00671">
    <property type="entry name" value="D_2_HYDROXYACID_DH_3"/>
    <property type="match status" value="1"/>
</dbReference>
<gene>
    <name evidence="1" type="primary">pdxB</name>
    <name type="ordered locus">CKO_00466</name>
</gene>
<proteinExistence type="inferred from homology"/>
<comment type="function">
    <text evidence="1">Catalyzes the oxidation of erythronate-4-phosphate to 3-hydroxy-2-oxo-4-phosphonooxybutanoate.</text>
</comment>
<comment type="catalytic activity">
    <reaction evidence="1">
        <text>4-phospho-D-erythronate + NAD(+) = (R)-3-hydroxy-2-oxo-4-phosphooxybutanoate + NADH + H(+)</text>
        <dbReference type="Rhea" id="RHEA:18829"/>
        <dbReference type="ChEBI" id="CHEBI:15378"/>
        <dbReference type="ChEBI" id="CHEBI:57540"/>
        <dbReference type="ChEBI" id="CHEBI:57945"/>
        <dbReference type="ChEBI" id="CHEBI:58538"/>
        <dbReference type="ChEBI" id="CHEBI:58766"/>
        <dbReference type="EC" id="1.1.1.290"/>
    </reaction>
</comment>
<comment type="pathway">
    <text evidence="1">Cofactor biosynthesis; pyridoxine 5'-phosphate biosynthesis; pyridoxine 5'-phosphate from D-erythrose 4-phosphate: step 2/5.</text>
</comment>
<comment type="subunit">
    <text evidence="1">Homodimer.</text>
</comment>
<comment type="subcellular location">
    <subcellularLocation>
        <location evidence="1">Cytoplasm</location>
    </subcellularLocation>
</comment>
<comment type="similarity">
    <text evidence="1">Belongs to the D-isomer specific 2-hydroxyacid dehydrogenase family. PdxB subfamily.</text>
</comment>
<reference key="1">
    <citation type="submission" date="2007-08" db="EMBL/GenBank/DDBJ databases">
        <authorList>
            <consortium name="The Citrobacter koseri Genome Sequencing Project"/>
            <person name="McClelland M."/>
            <person name="Sanderson E.K."/>
            <person name="Porwollik S."/>
            <person name="Spieth J."/>
            <person name="Clifton W.S."/>
            <person name="Latreille P."/>
            <person name="Courtney L."/>
            <person name="Wang C."/>
            <person name="Pepin K."/>
            <person name="Bhonagiri V."/>
            <person name="Nash W."/>
            <person name="Johnson M."/>
            <person name="Thiruvilangam P."/>
            <person name="Wilson R."/>
        </authorList>
    </citation>
    <scope>NUCLEOTIDE SEQUENCE [LARGE SCALE GENOMIC DNA]</scope>
    <source>
        <strain>ATCC BAA-895 / CDC 4225-83 / SGSC4696</strain>
    </source>
</reference>
<protein>
    <recommendedName>
        <fullName evidence="1">Erythronate-4-phosphate dehydrogenase</fullName>
        <ecNumber evidence="1">1.1.1.290</ecNumber>
    </recommendedName>
</protein>
<name>PDXB_CITK8</name>
<accession>A8ADQ9</accession>
<keyword id="KW-0963">Cytoplasm</keyword>
<keyword id="KW-0520">NAD</keyword>
<keyword id="KW-0560">Oxidoreductase</keyword>
<keyword id="KW-0664">Pyridoxine biosynthesis</keyword>
<keyword id="KW-1185">Reference proteome</keyword>
<evidence type="ECO:0000255" key="1">
    <source>
        <dbReference type="HAMAP-Rule" id="MF_01825"/>
    </source>
</evidence>
<feature type="chain" id="PRO_1000088414" description="Erythronate-4-phosphate dehydrogenase">
    <location>
        <begin position="1"/>
        <end position="378"/>
    </location>
</feature>
<feature type="active site" evidence="1">
    <location>
        <position position="208"/>
    </location>
</feature>
<feature type="active site" evidence="1">
    <location>
        <position position="237"/>
    </location>
</feature>
<feature type="active site" description="Proton donor" evidence="1">
    <location>
        <position position="254"/>
    </location>
</feature>
<feature type="binding site" evidence="1">
    <location>
        <position position="45"/>
    </location>
    <ligand>
        <name>substrate</name>
    </ligand>
</feature>
<feature type="binding site" evidence="1">
    <location>
        <position position="66"/>
    </location>
    <ligand>
        <name>substrate</name>
    </ligand>
</feature>
<feature type="binding site" evidence="1">
    <location>
        <position position="146"/>
    </location>
    <ligand>
        <name>NAD(+)</name>
        <dbReference type="ChEBI" id="CHEBI:57540"/>
    </ligand>
</feature>
<feature type="binding site" evidence="1">
    <location>
        <position position="175"/>
    </location>
    <ligand>
        <name>NAD(+)</name>
        <dbReference type="ChEBI" id="CHEBI:57540"/>
    </ligand>
</feature>
<feature type="binding site" evidence="1">
    <location>
        <position position="232"/>
    </location>
    <ligand>
        <name>NAD(+)</name>
        <dbReference type="ChEBI" id="CHEBI:57540"/>
    </ligand>
</feature>
<feature type="binding site" evidence="1">
    <location>
        <position position="257"/>
    </location>
    <ligand>
        <name>NAD(+)</name>
        <dbReference type="ChEBI" id="CHEBI:57540"/>
    </ligand>
</feature>
<feature type="binding site" evidence="1">
    <location>
        <position position="258"/>
    </location>
    <ligand>
        <name>substrate</name>
    </ligand>
</feature>
<sequence length="378" mass="41017">MKILVDENMPYARELFSRLGEVKAVPGRPIPVAELDDADALMVRSVTKVNEALLGGKSIKFVGTATAGTDHVDEAWLKQAGVGFSAAPGCNAIAVVEYVFSALLMLAERDGFALSDRTVGIVGVGNVGARLQARLEALGIRTLLCDPPRADRGDEGDFRSLDELVQEADILTFHTPLYKEGPYKTLHLADEALIGRLKPGTILINACRGPVVDNTALLARLNAGQSLSVVLDVWEGEPDLNVALLEKIDIGTSHIAGYTLEGKARGTTQVFEAYSTFIGRAQKVALDTLLPAPEFGRITLHGPLDQPTLKRLAHLVYDVRRDDAPLRKVAGIPGEFDKLRKNYLERREWSSLYVMCDDASAATLLHKLGFNAVHHPAH</sequence>